<dbReference type="EMBL" id="AM933173">
    <property type="protein sequence ID" value="CAR39704.1"/>
    <property type="molecule type" value="Genomic_DNA"/>
</dbReference>
<dbReference type="RefSeq" id="WP_000157587.1">
    <property type="nucleotide sequence ID" value="NC_011274.1"/>
</dbReference>
<dbReference type="SMR" id="B5R7K7"/>
<dbReference type="KEGG" id="seg:SG3931"/>
<dbReference type="HOGENOM" id="CLU_189182_0_0_6"/>
<dbReference type="Proteomes" id="UP000008321">
    <property type="component" value="Chromosome"/>
</dbReference>
<dbReference type="GO" id="GO:0003677">
    <property type="term" value="F:DNA binding"/>
    <property type="evidence" value="ECO:0007669"/>
    <property type="project" value="UniProtKB-KW"/>
</dbReference>
<dbReference type="GO" id="GO:0005506">
    <property type="term" value="F:iron ion binding"/>
    <property type="evidence" value="ECO:0007669"/>
    <property type="project" value="UniProtKB-UniRule"/>
</dbReference>
<dbReference type="GO" id="GO:0051536">
    <property type="term" value="F:iron-sulfur cluster binding"/>
    <property type="evidence" value="ECO:0007669"/>
    <property type="project" value="UniProtKB-KW"/>
</dbReference>
<dbReference type="Gene3D" id="1.10.10.10">
    <property type="entry name" value="Winged helix-like DNA-binding domain superfamily/Winged helix DNA-binding domain"/>
    <property type="match status" value="1"/>
</dbReference>
<dbReference type="HAMAP" id="MF_01586">
    <property type="entry name" value="FeoC"/>
    <property type="match status" value="1"/>
</dbReference>
<dbReference type="InterPro" id="IPR023732">
    <property type="entry name" value="FeoC"/>
</dbReference>
<dbReference type="InterPro" id="IPR015102">
    <property type="entry name" value="Tscrpt_reg_HTH_FeoC"/>
</dbReference>
<dbReference type="InterPro" id="IPR036388">
    <property type="entry name" value="WH-like_DNA-bd_sf"/>
</dbReference>
<dbReference type="InterPro" id="IPR036390">
    <property type="entry name" value="WH_DNA-bd_sf"/>
</dbReference>
<dbReference type="NCBIfam" id="NF011960">
    <property type="entry name" value="PRK15431.1"/>
    <property type="match status" value="1"/>
</dbReference>
<dbReference type="Pfam" id="PF09012">
    <property type="entry name" value="FeoC"/>
    <property type="match status" value="1"/>
</dbReference>
<dbReference type="SUPFAM" id="SSF46785">
    <property type="entry name" value="Winged helix' DNA-binding domain"/>
    <property type="match status" value="1"/>
</dbReference>
<keyword id="KW-0238">DNA-binding</keyword>
<keyword id="KW-0408">Iron</keyword>
<keyword id="KW-0411">Iron-sulfur</keyword>
<keyword id="KW-0479">Metal-binding</keyword>
<keyword id="KW-0678">Repressor</keyword>
<keyword id="KW-0804">Transcription</keyword>
<keyword id="KW-0805">Transcription regulation</keyword>
<accession>B5R7K7</accession>
<sequence length="78" mass="8648">MASLIQVRDLLALRGRMEATQISHTLHAPQPMIDAMLNQLEIMGKAVRIPEEADGCLSGSCKSCPEGKACLREWWALR</sequence>
<gene>
    <name evidence="1" type="primary">feoC</name>
    <name type="ordered locus">SG3931</name>
</gene>
<organism>
    <name type="scientific">Salmonella gallinarum (strain 287/91 / NCTC 13346)</name>
    <dbReference type="NCBI Taxonomy" id="550538"/>
    <lineage>
        <taxon>Bacteria</taxon>
        <taxon>Pseudomonadati</taxon>
        <taxon>Pseudomonadota</taxon>
        <taxon>Gammaproteobacteria</taxon>
        <taxon>Enterobacterales</taxon>
        <taxon>Enterobacteriaceae</taxon>
        <taxon>Salmonella</taxon>
    </lineage>
</organism>
<protein>
    <recommendedName>
        <fullName evidence="1">Probable [Fe-S]-dependent transcriptional repressor</fullName>
    </recommendedName>
</protein>
<proteinExistence type="inferred from homology"/>
<reference key="1">
    <citation type="journal article" date="2008" name="Genome Res.">
        <title>Comparative genome analysis of Salmonella enteritidis PT4 and Salmonella gallinarum 287/91 provides insights into evolutionary and host adaptation pathways.</title>
        <authorList>
            <person name="Thomson N.R."/>
            <person name="Clayton D.J."/>
            <person name="Windhorst D."/>
            <person name="Vernikos G."/>
            <person name="Davidson S."/>
            <person name="Churcher C."/>
            <person name="Quail M.A."/>
            <person name="Stevens M."/>
            <person name="Jones M.A."/>
            <person name="Watson M."/>
            <person name="Barron A."/>
            <person name="Layton A."/>
            <person name="Pickard D."/>
            <person name="Kingsley R.A."/>
            <person name="Bignell A."/>
            <person name="Clark L."/>
            <person name="Harris B."/>
            <person name="Ormond D."/>
            <person name="Abdellah Z."/>
            <person name="Brooks K."/>
            <person name="Cherevach I."/>
            <person name="Chillingworth T."/>
            <person name="Woodward J."/>
            <person name="Norberczak H."/>
            <person name="Lord A."/>
            <person name="Arrowsmith C."/>
            <person name="Jagels K."/>
            <person name="Moule S."/>
            <person name="Mungall K."/>
            <person name="Saunders M."/>
            <person name="Whitehead S."/>
            <person name="Chabalgoity J.A."/>
            <person name="Maskell D."/>
            <person name="Humphreys T."/>
            <person name="Roberts M."/>
            <person name="Barrow P.A."/>
            <person name="Dougan G."/>
            <person name="Parkhill J."/>
        </authorList>
    </citation>
    <scope>NUCLEOTIDE SEQUENCE [LARGE SCALE GENOMIC DNA]</scope>
    <source>
        <strain>287/91 / NCTC 13346</strain>
    </source>
</reference>
<comment type="function">
    <text evidence="1">May function as a transcriptional regulator that controls feoABC expression.</text>
</comment>
<comment type="similarity">
    <text evidence="1">Belongs to the FeoC family.</text>
</comment>
<feature type="chain" id="PRO_1000201333" description="Probable [Fe-S]-dependent transcriptional repressor">
    <location>
        <begin position="1"/>
        <end position="78"/>
    </location>
</feature>
<feature type="binding site" evidence="1">
    <location>
        <position position="56"/>
    </location>
    <ligand>
        <name>iron-sulfur cluster</name>
        <dbReference type="ChEBI" id="CHEBI:30408"/>
    </ligand>
</feature>
<feature type="binding site" evidence="1">
    <location>
        <position position="61"/>
    </location>
    <ligand>
        <name>iron-sulfur cluster</name>
        <dbReference type="ChEBI" id="CHEBI:30408"/>
    </ligand>
</feature>
<feature type="binding site" evidence="1">
    <location>
        <position position="64"/>
    </location>
    <ligand>
        <name>iron-sulfur cluster</name>
        <dbReference type="ChEBI" id="CHEBI:30408"/>
    </ligand>
</feature>
<feature type="binding site" evidence="1">
    <location>
        <position position="70"/>
    </location>
    <ligand>
        <name>iron-sulfur cluster</name>
        <dbReference type="ChEBI" id="CHEBI:30408"/>
    </ligand>
</feature>
<evidence type="ECO:0000255" key="1">
    <source>
        <dbReference type="HAMAP-Rule" id="MF_01586"/>
    </source>
</evidence>
<name>FEOC_SALG2</name>